<evidence type="ECO:0000255" key="1">
    <source>
        <dbReference type="HAMAP-Rule" id="MF_00376"/>
    </source>
</evidence>
<gene>
    <name evidence="1" type="primary">coaE</name>
    <name type="ordered locus">Rfer_2905</name>
</gene>
<proteinExistence type="inferred from homology"/>
<dbReference type="EC" id="2.7.1.24" evidence="1"/>
<dbReference type="EMBL" id="CP000267">
    <property type="protein sequence ID" value="ABD70616.1"/>
    <property type="molecule type" value="Genomic_DNA"/>
</dbReference>
<dbReference type="RefSeq" id="WP_011465182.1">
    <property type="nucleotide sequence ID" value="NC_007908.1"/>
</dbReference>
<dbReference type="SMR" id="Q21UD7"/>
<dbReference type="STRING" id="338969.Rfer_2905"/>
<dbReference type="KEGG" id="rfr:Rfer_2905"/>
<dbReference type="eggNOG" id="COG0237">
    <property type="taxonomic scope" value="Bacteria"/>
</dbReference>
<dbReference type="HOGENOM" id="CLU_057180_1_2_4"/>
<dbReference type="OrthoDB" id="9812943at2"/>
<dbReference type="UniPathway" id="UPA00241">
    <property type="reaction ID" value="UER00356"/>
</dbReference>
<dbReference type="Proteomes" id="UP000008332">
    <property type="component" value="Chromosome"/>
</dbReference>
<dbReference type="GO" id="GO:0005737">
    <property type="term" value="C:cytoplasm"/>
    <property type="evidence" value="ECO:0007669"/>
    <property type="project" value="UniProtKB-SubCell"/>
</dbReference>
<dbReference type="GO" id="GO:0005524">
    <property type="term" value="F:ATP binding"/>
    <property type="evidence" value="ECO:0007669"/>
    <property type="project" value="UniProtKB-UniRule"/>
</dbReference>
<dbReference type="GO" id="GO:0004140">
    <property type="term" value="F:dephospho-CoA kinase activity"/>
    <property type="evidence" value="ECO:0007669"/>
    <property type="project" value="UniProtKB-UniRule"/>
</dbReference>
<dbReference type="GO" id="GO:0015937">
    <property type="term" value="P:coenzyme A biosynthetic process"/>
    <property type="evidence" value="ECO:0007669"/>
    <property type="project" value="UniProtKB-UniRule"/>
</dbReference>
<dbReference type="CDD" id="cd02022">
    <property type="entry name" value="DPCK"/>
    <property type="match status" value="1"/>
</dbReference>
<dbReference type="Gene3D" id="3.40.50.300">
    <property type="entry name" value="P-loop containing nucleotide triphosphate hydrolases"/>
    <property type="match status" value="1"/>
</dbReference>
<dbReference type="HAMAP" id="MF_00376">
    <property type="entry name" value="Dephospho_CoA_kinase"/>
    <property type="match status" value="1"/>
</dbReference>
<dbReference type="InterPro" id="IPR001977">
    <property type="entry name" value="Depp_CoAkinase"/>
</dbReference>
<dbReference type="InterPro" id="IPR027417">
    <property type="entry name" value="P-loop_NTPase"/>
</dbReference>
<dbReference type="NCBIfam" id="TIGR00152">
    <property type="entry name" value="dephospho-CoA kinase"/>
    <property type="match status" value="1"/>
</dbReference>
<dbReference type="PANTHER" id="PTHR10695:SF46">
    <property type="entry name" value="BIFUNCTIONAL COENZYME A SYNTHASE-RELATED"/>
    <property type="match status" value="1"/>
</dbReference>
<dbReference type="PANTHER" id="PTHR10695">
    <property type="entry name" value="DEPHOSPHO-COA KINASE-RELATED"/>
    <property type="match status" value="1"/>
</dbReference>
<dbReference type="Pfam" id="PF01121">
    <property type="entry name" value="CoaE"/>
    <property type="match status" value="1"/>
</dbReference>
<dbReference type="SUPFAM" id="SSF52540">
    <property type="entry name" value="P-loop containing nucleoside triphosphate hydrolases"/>
    <property type="match status" value="1"/>
</dbReference>
<dbReference type="PROSITE" id="PS51219">
    <property type="entry name" value="DPCK"/>
    <property type="match status" value="1"/>
</dbReference>
<feature type="chain" id="PRO_0000243328" description="Dephospho-CoA kinase">
    <location>
        <begin position="1"/>
        <end position="212"/>
    </location>
</feature>
<feature type="domain" description="DPCK" evidence="1">
    <location>
        <begin position="6"/>
        <end position="211"/>
    </location>
</feature>
<feature type="binding site" evidence="1">
    <location>
        <begin position="14"/>
        <end position="19"/>
    </location>
    <ligand>
        <name>ATP</name>
        <dbReference type="ChEBI" id="CHEBI:30616"/>
    </ligand>
</feature>
<reference key="1">
    <citation type="submission" date="2006-02" db="EMBL/GenBank/DDBJ databases">
        <title>Complete sequence of chromosome of Rhodoferax ferrireducens DSM 15236.</title>
        <authorList>
            <person name="Copeland A."/>
            <person name="Lucas S."/>
            <person name="Lapidus A."/>
            <person name="Barry K."/>
            <person name="Detter J.C."/>
            <person name="Glavina del Rio T."/>
            <person name="Hammon N."/>
            <person name="Israni S."/>
            <person name="Pitluck S."/>
            <person name="Brettin T."/>
            <person name="Bruce D."/>
            <person name="Han C."/>
            <person name="Tapia R."/>
            <person name="Gilna P."/>
            <person name="Kiss H."/>
            <person name="Schmutz J."/>
            <person name="Larimer F."/>
            <person name="Land M."/>
            <person name="Kyrpides N."/>
            <person name="Ivanova N."/>
            <person name="Richardson P."/>
        </authorList>
    </citation>
    <scope>NUCLEOTIDE SEQUENCE [LARGE SCALE GENOMIC DNA]</scope>
    <source>
        <strain>ATCC BAA-621 / DSM 15236 / T118</strain>
    </source>
</reference>
<comment type="function">
    <text evidence="1">Catalyzes the phosphorylation of the 3'-hydroxyl group of dephosphocoenzyme A to form coenzyme A.</text>
</comment>
<comment type="catalytic activity">
    <reaction evidence="1">
        <text>3'-dephospho-CoA + ATP = ADP + CoA + H(+)</text>
        <dbReference type="Rhea" id="RHEA:18245"/>
        <dbReference type="ChEBI" id="CHEBI:15378"/>
        <dbReference type="ChEBI" id="CHEBI:30616"/>
        <dbReference type="ChEBI" id="CHEBI:57287"/>
        <dbReference type="ChEBI" id="CHEBI:57328"/>
        <dbReference type="ChEBI" id="CHEBI:456216"/>
        <dbReference type="EC" id="2.7.1.24"/>
    </reaction>
</comment>
<comment type="pathway">
    <text evidence="1">Cofactor biosynthesis; coenzyme A biosynthesis; CoA from (R)-pantothenate: step 5/5.</text>
</comment>
<comment type="subcellular location">
    <subcellularLocation>
        <location evidence="1">Cytoplasm</location>
    </subcellularLocation>
</comment>
<comment type="similarity">
    <text evidence="1">Belongs to the CoaE family.</text>
</comment>
<accession>Q21UD7</accession>
<name>COAE_ALBFT</name>
<organism>
    <name type="scientific">Albidiferax ferrireducens (strain ATCC BAA-621 / DSM 15236 / T118)</name>
    <name type="common">Rhodoferax ferrireducens</name>
    <dbReference type="NCBI Taxonomy" id="338969"/>
    <lineage>
        <taxon>Bacteria</taxon>
        <taxon>Pseudomonadati</taxon>
        <taxon>Pseudomonadota</taxon>
        <taxon>Betaproteobacteria</taxon>
        <taxon>Burkholderiales</taxon>
        <taxon>Comamonadaceae</taxon>
        <taxon>Rhodoferax</taxon>
    </lineage>
</organism>
<protein>
    <recommendedName>
        <fullName evidence="1">Dephospho-CoA kinase</fullName>
        <ecNumber evidence="1">2.7.1.24</ecNumber>
    </recommendedName>
    <alternativeName>
        <fullName evidence="1">Dephosphocoenzyme A kinase</fullName>
    </alternativeName>
</protein>
<keyword id="KW-0067">ATP-binding</keyword>
<keyword id="KW-0173">Coenzyme A biosynthesis</keyword>
<keyword id="KW-0963">Cytoplasm</keyword>
<keyword id="KW-0418">Kinase</keyword>
<keyword id="KW-0547">Nucleotide-binding</keyword>
<keyword id="KW-1185">Reference proteome</keyword>
<keyword id="KW-0808">Transferase</keyword>
<sequence>MRGLVRLGLTGGIGSGKSTVAGLLAELGAAVVDADAIARHLTAPNGPAIASIAATFGPDFITSTGAMDREKMRALAYADITARQRLEAIIHPLVRQETQRQTLLAANQGHPCIVFDVPLLVESTTWREKLDWVLVVDCTPATQISRVMARNALTRDEVEKIIASQASRRHRLNAADAVIFNDSLSLGALALEVDEVARHFGLSCQPLSPNQK</sequence>